<feature type="chain" id="PRO_0000253962" description="Protein Pat">
    <location>
        <begin position="1"/>
        <end position="293"/>
    </location>
</feature>
<feature type="domain" description="BEN" evidence="1">
    <location>
        <begin position="187"/>
        <end position="287"/>
    </location>
</feature>
<dbReference type="EMBL" id="AJ002384">
    <property type="protein sequence ID" value="CAA05358.2"/>
    <property type="molecule type" value="mRNA"/>
</dbReference>
<dbReference type="EMBL" id="BC072773">
    <property type="protein sequence ID" value="AAH72773.1"/>
    <property type="molecule type" value="mRNA"/>
</dbReference>
<dbReference type="RefSeq" id="NP_001080932.1">
    <property type="nucleotide sequence ID" value="NM_001087463.1"/>
</dbReference>
<dbReference type="SMR" id="O73622"/>
<dbReference type="GeneID" id="394273"/>
<dbReference type="KEGG" id="xla:394273"/>
<dbReference type="AGR" id="Xenbase:XB-GENE-6254671"/>
<dbReference type="CTD" id="394273"/>
<dbReference type="Xenbase" id="XB-GENE-6254671">
    <property type="gene designation" value="pgat.L"/>
</dbReference>
<dbReference type="OrthoDB" id="8939517at2759"/>
<dbReference type="Proteomes" id="UP000186698">
    <property type="component" value="Chromosome 5L"/>
</dbReference>
<dbReference type="Bgee" id="394273">
    <property type="expression patterns" value="Expressed in ovary and 7 other cell types or tissues"/>
</dbReference>
<dbReference type="GO" id="GO:0005737">
    <property type="term" value="C:cytoplasm"/>
    <property type="evidence" value="ECO:0000314"/>
    <property type="project" value="UniProtKB"/>
</dbReference>
<dbReference type="GO" id="GO:0032019">
    <property type="term" value="C:mitochondrial cloud"/>
    <property type="evidence" value="ECO:0000314"/>
    <property type="project" value="UniProtKB"/>
</dbReference>
<dbReference type="GO" id="GO:0005634">
    <property type="term" value="C:nucleus"/>
    <property type="evidence" value="ECO:0000314"/>
    <property type="project" value="UniProtKB"/>
</dbReference>
<dbReference type="GO" id="GO:0043186">
    <property type="term" value="C:P granule"/>
    <property type="evidence" value="ECO:0000314"/>
    <property type="project" value="UniProtKB"/>
</dbReference>
<dbReference type="GO" id="GO:0045495">
    <property type="term" value="C:pole plasm"/>
    <property type="evidence" value="ECO:0000314"/>
    <property type="project" value="UniProtKB"/>
</dbReference>
<dbReference type="GO" id="GO:0003677">
    <property type="term" value="F:DNA binding"/>
    <property type="evidence" value="ECO:0007669"/>
    <property type="project" value="InterPro"/>
</dbReference>
<dbReference type="GO" id="GO:0007315">
    <property type="term" value="P:pole plasm assembly"/>
    <property type="evidence" value="ECO:0000315"/>
    <property type="project" value="UniProtKB"/>
</dbReference>
<dbReference type="InterPro" id="IPR018379">
    <property type="entry name" value="BEN_domain"/>
</dbReference>
<dbReference type="PROSITE" id="PS51457">
    <property type="entry name" value="BEN"/>
    <property type="match status" value="1"/>
</dbReference>
<comment type="function">
    <text evidence="4">Probably plays a role in germ plasm formation, positioning and maintenance.</text>
</comment>
<comment type="subunit">
    <text evidence="6">Interacts with poc1b.</text>
</comment>
<comment type="subcellular location">
    <subcellularLocation>
        <location evidence="4 6">Cytoplasm</location>
    </subcellularLocation>
    <subcellularLocation>
        <location evidence="4">Nucleus</location>
    </subcellularLocation>
    <text>Unlike the transcript, the protein is not exclusively localized to germ plasm but is also present in the nuclei of early oocytes, of later stage primordial germ cells (PGCs) and of some somatic cells, as well as in their cytoplasm (PubMed:16216237).</text>
</comment>
<comment type="tissue specificity">
    <text evidence="2 3 4 5 6 7">An mRNA and protein component of germ plasm and primordial germ cells (PGCs) throughout oogenesis and early development, being first localized to the granulo-fibrillar material (GFM) of the mitochondrial cloud in stage I and II oocytes and to the periphery of mature germinal granules both in oocytes and in embryos. Shows some somatic expression including the ectodermal cells of tailbud embryos. In adults, only expressed in ovaries.</text>
</comment>
<comment type="developmental stage">
    <text evidence="4 6 7">Expressed both maternally and zygotically from at least the pre-vitellogenic stage I of oogenesis through to the tadpole stages.</text>
</comment>
<evidence type="ECO:0000255" key="1">
    <source>
        <dbReference type="PROSITE-ProRule" id="PRU00784"/>
    </source>
</evidence>
<evidence type="ECO:0000269" key="2">
    <source>
    </source>
</evidence>
<evidence type="ECO:0000269" key="3">
    <source>
    </source>
</evidence>
<evidence type="ECO:0000269" key="4">
    <source>
    </source>
</evidence>
<evidence type="ECO:0000269" key="5">
    <source>
    </source>
</evidence>
<evidence type="ECO:0000269" key="6">
    <source>
    </source>
</evidence>
<evidence type="ECO:0000269" key="7">
    <source>
    </source>
</evidence>
<evidence type="ECO:0000303" key="8">
    <source>
    </source>
</evidence>
<evidence type="ECO:0000305" key="9"/>
<evidence type="ECO:0000312" key="10">
    <source>
        <dbReference type="EMBL" id="AAH72773.1"/>
    </source>
</evidence>
<evidence type="ECO:0000312" key="11">
    <source>
        <dbReference type="EMBL" id="CAA05358.2"/>
    </source>
</evidence>
<sequence>MALKAEDSFDIYSQLIQSFCRYAENTTVSESQSPAFNAQKEFQTCQDHACCTHSEAHTHILMQQWQLLEEQWEYIDHLKTDVAALKQLLHGFMNSLSGTDSGMEGTNHFLPPHQNPTLLKDEEIVASALNRPSVDINGFEENITTGAQIHAAFTKSPKKMPATSTPRKSEVLWSCSPTLATDGYFMLPDIILNPLDGKKLVSMLRSSNYEPHRFAELLFQHHVPHSLFQLWANKVNFDGSRGKLGLPRNLMIDILHQTSKRFVLGPKEKRKIKTRLNLLLRTRQDRAWWDVGL</sequence>
<keyword id="KW-0963">Cytoplasm</keyword>
<keyword id="KW-0217">Developmental protein</keyword>
<keyword id="KW-0221">Differentiation</keyword>
<keyword id="KW-0539">Nucleus</keyword>
<keyword id="KW-0896">Oogenesis</keyword>
<keyword id="KW-1185">Reference proteome</keyword>
<protein>
    <recommendedName>
        <fullName>Protein Pat</fullName>
    </recommendedName>
    <alternativeName>
        <fullName>Primordial germ cell-associated transcript protein</fullName>
    </alternativeName>
    <alternativeName>
        <fullName>Xpat</fullName>
    </alternativeName>
</protein>
<name>PAT_XENLA</name>
<reference evidence="9 11" key="1">
    <citation type="journal article" date="1998" name="Mech. Dev.">
        <title>Xpat, a gene expressed specifically in germ plasm and primordial germ cells of Xenopus laevis.</title>
        <authorList>
            <person name="Hudson C."/>
            <person name="Woodland H.R."/>
        </authorList>
    </citation>
    <scope>NUCLEOTIDE SEQUENCE [MRNA]</scope>
    <scope>TISSUE SPECIFICITY</scope>
    <scope>DEVELOPMENTAL STAGE</scope>
    <source>
        <tissue evidence="7">Embryo</tissue>
    </source>
</reference>
<reference evidence="10" key="2">
    <citation type="submission" date="2004-06" db="EMBL/GenBank/DDBJ databases">
        <authorList>
            <consortium name="NIH - Xenopus Gene Collection (XGC) project"/>
        </authorList>
    </citation>
    <scope>NUCLEOTIDE SEQUENCE [LARGE SCALE MRNA]</scope>
    <source>
        <tissue evidence="10">Embryo</tissue>
    </source>
</reference>
<reference evidence="9" key="3">
    <citation type="journal article" date="2002" name="Dev. Biol.">
        <title>Three-dimensional ultrastructural analysis of RNA distribution within germinal granules of Xenopus.</title>
        <authorList>
            <person name="Kloc M."/>
            <person name="Dougherty M.T."/>
            <person name="Bilinski S."/>
            <person name="Chan A.P."/>
            <person name="Brey E."/>
            <person name="King M.L."/>
            <person name="Patrick C.W. Jr."/>
            <person name="Etkin L.D."/>
        </authorList>
    </citation>
    <scope>TISSUE SPECIFICITY</scope>
</reference>
<reference evidence="9" key="4">
    <citation type="journal article" date="2005" name="Dev. Biol.">
        <title>Xenopus Xpat protein is a major component of germ plasm and may function in its organisation and positioning.</title>
        <authorList>
            <person name="Machado R.J."/>
            <person name="Moore W."/>
            <person name="Hames R."/>
            <person name="Houliston E."/>
            <person name="Chang P."/>
            <person name="King M.L."/>
            <person name="Woodland H.R."/>
        </authorList>
    </citation>
    <scope>FUNCTION</scope>
    <scope>SUBCELLULAR LOCATION</scope>
    <scope>TISSUE SPECIFICITY</scope>
    <scope>DEVELOPMENTAL STAGE</scope>
</reference>
<reference evidence="9" key="5">
    <citation type="journal article" date="2005" name="Int. J. Dev. Biol.">
        <title>Delivery of germinal granules and localized RNAs via the messenger transport organizer pathway to the vegetal cortex of Xenopus oocytes occurs through directional expansion of the mitochondrial cloud.</title>
        <authorList>
            <person name="Wilk K."/>
            <person name="Bilinski S."/>
            <person name="Dougherty M.T."/>
            <person name="Kloc M."/>
        </authorList>
    </citation>
    <scope>TISSUE SPECIFICITY</scope>
</reference>
<reference evidence="9" key="6">
    <citation type="journal article" date="2005" name="Dev. Growth Differ.">
        <title>Identification of asymmetrically localized transcripts along the animal-vegetal axis of the Xenopus egg.</title>
        <authorList>
            <person name="Kataoka K."/>
            <person name="Tazaki A."/>
            <person name="Kitayama A."/>
            <person name="Ueno N."/>
            <person name="Watanabe K."/>
            <person name="Mochii M."/>
        </authorList>
    </citation>
    <scope>TISSUE SPECIFICITY</scope>
</reference>
<reference key="7">
    <citation type="journal article" date="2008" name="Exp. Cell Res.">
        <title>Pix1 and Pix2 are novel WD40 microtubule-associated proteins that colocalize with mitochondria in Xenopus germ plasm and centrosomes in human cells.</title>
        <authorList>
            <person name="Hames R.S."/>
            <person name="Hames R."/>
            <person name="Prosser S.L."/>
            <person name="Euteneuer U."/>
            <person name="Lopes C.A."/>
            <person name="Moore W."/>
            <person name="Woodland H.R."/>
            <person name="Fry A.M."/>
        </authorList>
    </citation>
    <scope>INTERACTION WITH POC1B</scope>
    <scope>SUBCELLULAR LOCATION</scope>
    <scope>TISSUE SPECIFICITY</scope>
    <scope>DEVELOPMENTAL STAGE</scope>
</reference>
<proteinExistence type="evidence at protein level"/>
<gene>
    <name evidence="8 11" type="primary">pat</name>
</gene>
<organism>
    <name type="scientific">Xenopus laevis</name>
    <name type="common">African clawed frog</name>
    <dbReference type="NCBI Taxonomy" id="8355"/>
    <lineage>
        <taxon>Eukaryota</taxon>
        <taxon>Metazoa</taxon>
        <taxon>Chordata</taxon>
        <taxon>Craniata</taxon>
        <taxon>Vertebrata</taxon>
        <taxon>Euteleostomi</taxon>
        <taxon>Amphibia</taxon>
        <taxon>Batrachia</taxon>
        <taxon>Anura</taxon>
        <taxon>Pipoidea</taxon>
        <taxon>Pipidae</taxon>
        <taxon>Xenopodinae</taxon>
        <taxon>Xenopus</taxon>
        <taxon>Xenopus</taxon>
    </lineage>
</organism>
<accession>O73622</accession>
<accession>Q6GQH1</accession>